<keyword id="KW-0150">Chloroplast</keyword>
<keyword id="KW-0934">Plastid</keyword>
<keyword id="KW-0687">Ribonucleoprotein</keyword>
<keyword id="KW-0689">Ribosomal protein</keyword>
<keyword id="KW-0694">RNA-binding</keyword>
<keyword id="KW-0699">rRNA-binding</keyword>
<protein>
    <recommendedName>
        <fullName evidence="1">Small ribosomal subunit protein uS14c</fullName>
    </recommendedName>
    <alternativeName>
        <fullName evidence="2">30S ribosomal protein S14, chloroplastic</fullName>
    </alternativeName>
</protein>
<feature type="chain" id="PRO_0000130970" description="Small ribosomal subunit protein uS14c">
    <location>
        <begin position="1"/>
        <end position="100"/>
    </location>
</feature>
<accession>Q9TLQ7</accession>
<comment type="function">
    <text evidence="1">Binds 16S rRNA, required for the assembly of 30S particles.</text>
</comment>
<comment type="subunit">
    <text evidence="1">Part of the 30S ribosomal subunit.</text>
</comment>
<comment type="subcellular location">
    <subcellularLocation>
        <location>Plastid</location>
        <location>Chloroplast</location>
    </subcellularLocation>
</comment>
<comment type="similarity">
    <text evidence="1">Belongs to the universal ribosomal protein uS14 family.</text>
</comment>
<dbReference type="EMBL" id="AF022186">
    <property type="protein sequence ID" value="AAF12882.1"/>
    <property type="molecule type" value="Genomic_DNA"/>
</dbReference>
<dbReference type="RefSeq" id="NP_045212.1">
    <property type="nucleotide sequence ID" value="NC_001840.1"/>
</dbReference>
<dbReference type="SMR" id="Q9TLQ7"/>
<dbReference type="GeneID" id="800231"/>
<dbReference type="GO" id="GO:0009507">
    <property type="term" value="C:chloroplast"/>
    <property type="evidence" value="ECO:0007669"/>
    <property type="project" value="UniProtKB-SubCell"/>
</dbReference>
<dbReference type="GO" id="GO:0015935">
    <property type="term" value="C:small ribosomal subunit"/>
    <property type="evidence" value="ECO:0007669"/>
    <property type="project" value="TreeGrafter"/>
</dbReference>
<dbReference type="GO" id="GO:0019843">
    <property type="term" value="F:rRNA binding"/>
    <property type="evidence" value="ECO:0007669"/>
    <property type="project" value="UniProtKB-UniRule"/>
</dbReference>
<dbReference type="GO" id="GO:0003735">
    <property type="term" value="F:structural constituent of ribosome"/>
    <property type="evidence" value="ECO:0007669"/>
    <property type="project" value="InterPro"/>
</dbReference>
<dbReference type="GO" id="GO:0006412">
    <property type="term" value="P:translation"/>
    <property type="evidence" value="ECO:0007669"/>
    <property type="project" value="UniProtKB-UniRule"/>
</dbReference>
<dbReference type="FunFam" id="1.10.287.1480:FF:000001">
    <property type="entry name" value="30S ribosomal protein S14"/>
    <property type="match status" value="1"/>
</dbReference>
<dbReference type="Gene3D" id="1.10.287.1480">
    <property type="match status" value="1"/>
</dbReference>
<dbReference type="HAMAP" id="MF_00537">
    <property type="entry name" value="Ribosomal_uS14_1"/>
    <property type="match status" value="1"/>
</dbReference>
<dbReference type="InterPro" id="IPR001209">
    <property type="entry name" value="Ribosomal_uS14"/>
</dbReference>
<dbReference type="InterPro" id="IPR023036">
    <property type="entry name" value="Ribosomal_uS14_bac/plastid"/>
</dbReference>
<dbReference type="InterPro" id="IPR018271">
    <property type="entry name" value="Ribosomal_uS14_CS"/>
</dbReference>
<dbReference type="NCBIfam" id="NF006477">
    <property type="entry name" value="PRK08881.1"/>
    <property type="match status" value="1"/>
</dbReference>
<dbReference type="PANTHER" id="PTHR19836">
    <property type="entry name" value="30S RIBOSOMAL PROTEIN S14"/>
    <property type="match status" value="1"/>
</dbReference>
<dbReference type="PANTHER" id="PTHR19836:SF19">
    <property type="entry name" value="SMALL RIBOSOMAL SUBUNIT PROTEIN US14M"/>
    <property type="match status" value="1"/>
</dbReference>
<dbReference type="Pfam" id="PF00253">
    <property type="entry name" value="Ribosomal_S14"/>
    <property type="match status" value="1"/>
</dbReference>
<dbReference type="SUPFAM" id="SSF57716">
    <property type="entry name" value="Glucocorticoid receptor-like (DNA-binding domain)"/>
    <property type="match status" value="1"/>
</dbReference>
<dbReference type="PROSITE" id="PS00527">
    <property type="entry name" value="RIBOSOMAL_S14"/>
    <property type="match status" value="1"/>
</dbReference>
<sequence>MAKKSVIQRNINRLKLINKYSAQREAIKNEIKRTSKVEKKISLYSNISRLPRDSSKVRLRSRCWVTGRGRSVYKNFGLSRHMFRFMASNGLLPGVVKSSW</sequence>
<gene>
    <name evidence="1" type="primary">rps14</name>
</gene>
<organism>
    <name type="scientific">Cyanidium caldarium</name>
    <name type="common">Red alga</name>
    <dbReference type="NCBI Taxonomy" id="2771"/>
    <lineage>
        <taxon>Eukaryota</taxon>
        <taxon>Rhodophyta</taxon>
        <taxon>Bangiophyceae</taxon>
        <taxon>Cyanidiales</taxon>
        <taxon>Cyanidiaceae</taxon>
        <taxon>Cyanidium</taxon>
    </lineage>
</organism>
<geneLocation type="chloroplast"/>
<proteinExistence type="inferred from homology"/>
<name>RR14_CYACA</name>
<reference key="1">
    <citation type="journal article" date="2000" name="J. Mol. Evol.">
        <title>The structure and gene repertoire of an ancient red algal plastid genome.</title>
        <authorList>
            <person name="Gloeckner G."/>
            <person name="Rosenthal A."/>
            <person name="Valentin K.-U."/>
        </authorList>
    </citation>
    <scope>NUCLEOTIDE SEQUENCE [LARGE SCALE GENOMIC DNA]</scope>
    <source>
        <strain>RK-1</strain>
    </source>
</reference>
<evidence type="ECO:0000255" key="1">
    <source>
        <dbReference type="HAMAP-Rule" id="MF_00537"/>
    </source>
</evidence>
<evidence type="ECO:0000305" key="2"/>